<proteinExistence type="inferred from homology"/>
<dbReference type="EMBL" id="EF115541">
    <property type="protein sequence ID" value="ABK79444.1"/>
    <property type="molecule type" value="Genomic_DNA"/>
</dbReference>
<dbReference type="RefSeq" id="YP_010144457.1">
    <property type="nucleotide sequence ID" value="NC_056985.1"/>
</dbReference>
<dbReference type="RefSeq" id="YP_874685.1">
    <property type="nucleotide sequence ID" value="NC_008590.1"/>
</dbReference>
<dbReference type="SMR" id="A1E9M3"/>
<dbReference type="GeneID" id="4525082"/>
<dbReference type="GeneID" id="67140677"/>
<dbReference type="OMA" id="WASVSTC"/>
<dbReference type="GO" id="GO:0009507">
    <property type="term" value="C:chloroplast"/>
    <property type="evidence" value="ECO:0007669"/>
    <property type="project" value="UniProtKB-SubCell"/>
</dbReference>
<dbReference type="GO" id="GO:1990904">
    <property type="term" value="C:ribonucleoprotein complex"/>
    <property type="evidence" value="ECO:0007669"/>
    <property type="project" value="UniProtKB-KW"/>
</dbReference>
<dbReference type="GO" id="GO:0005840">
    <property type="term" value="C:ribosome"/>
    <property type="evidence" value="ECO:0007669"/>
    <property type="project" value="UniProtKB-KW"/>
</dbReference>
<dbReference type="GO" id="GO:0019843">
    <property type="term" value="F:rRNA binding"/>
    <property type="evidence" value="ECO:0007669"/>
    <property type="project" value="UniProtKB-UniRule"/>
</dbReference>
<dbReference type="GO" id="GO:0003735">
    <property type="term" value="F:structural constituent of ribosome"/>
    <property type="evidence" value="ECO:0007669"/>
    <property type="project" value="InterPro"/>
</dbReference>
<dbReference type="GO" id="GO:0006412">
    <property type="term" value="P:translation"/>
    <property type="evidence" value="ECO:0007669"/>
    <property type="project" value="UniProtKB-UniRule"/>
</dbReference>
<dbReference type="FunFam" id="3.30.420.80:FF:000003">
    <property type="entry name" value="30S ribosomal protein S11, chloroplastic"/>
    <property type="match status" value="1"/>
</dbReference>
<dbReference type="Gene3D" id="3.30.420.80">
    <property type="entry name" value="Ribosomal protein S11"/>
    <property type="match status" value="1"/>
</dbReference>
<dbReference type="HAMAP" id="MF_01310">
    <property type="entry name" value="Ribosomal_uS11"/>
    <property type="match status" value="1"/>
</dbReference>
<dbReference type="InterPro" id="IPR001971">
    <property type="entry name" value="Ribosomal_uS11"/>
</dbReference>
<dbReference type="InterPro" id="IPR018102">
    <property type="entry name" value="Ribosomal_uS11_CS"/>
</dbReference>
<dbReference type="InterPro" id="IPR036967">
    <property type="entry name" value="Ribosomal_uS11_sf"/>
</dbReference>
<dbReference type="NCBIfam" id="NF003698">
    <property type="entry name" value="PRK05309.1"/>
    <property type="match status" value="1"/>
</dbReference>
<dbReference type="PANTHER" id="PTHR11759">
    <property type="entry name" value="40S RIBOSOMAL PROTEIN S14/30S RIBOSOMAL PROTEIN S11"/>
    <property type="match status" value="1"/>
</dbReference>
<dbReference type="Pfam" id="PF00411">
    <property type="entry name" value="Ribosomal_S11"/>
    <property type="match status" value="1"/>
</dbReference>
<dbReference type="PIRSF" id="PIRSF002131">
    <property type="entry name" value="Ribosomal_S11"/>
    <property type="match status" value="1"/>
</dbReference>
<dbReference type="SUPFAM" id="SSF53137">
    <property type="entry name" value="Translational machinery components"/>
    <property type="match status" value="1"/>
</dbReference>
<dbReference type="PROSITE" id="PS00054">
    <property type="entry name" value="RIBOSOMAL_S11"/>
    <property type="match status" value="1"/>
</dbReference>
<reference key="1">
    <citation type="journal article" date="2007" name="Theor. Appl. Genet.">
        <title>Complete chloroplast genome sequences of Hordeum vulgare, Sorghum bicolor and Agrostis stolonifera, and comparative analyses with other grass genomes.</title>
        <authorList>
            <person name="Saski C."/>
            <person name="Lee S.-B."/>
            <person name="Fjellheim S."/>
            <person name="Guda C."/>
            <person name="Jansen R.K."/>
            <person name="Luo H."/>
            <person name="Tomkins J."/>
            <person name="Rognli O.A."/>
            <person name="Daniell H."/>
            <person name="Clarke J.L."/>
        </authorList>
    </citation>
    <scope>NUCLEOTIDE SEQUENCE [LARGE SCALE GENOMIC DNA]</scope>
    <source>
        <strain>cv. Morex</strain>
    </source>
</reference>
<feature type="chain" id="PRO_0000294918" description="Small ribosomal subunit protein uS11c">
    <location>
        <begin position="1"/>
        <end position="143"/>
    </location>
</feature>
<accession>A1E9M3</accession>
<keyword id="KW-0150">Chloroplast</keyword>
<keyword id="KW-0934">Plastid</keyword>
<keyword id="KW-0687">Ribonucleoprotein</keyword>
<keyword id="KW-0689">Ribosomal protein</keyword>
<keyword id="KW-0694">RNA-binding</keyword>
<keyword id="KW-0699">rRNA-binding</keyword>
<comment type="subunit">
    <text evidence="1">Part of the 30S ribosomal subunit.</text>
</comment>
<comment type="subcellular location">
    <subcellularLocation>
        <location>Plastid</location>
        <location>Chloroplast</location>
    </subcellularLocation>
</comment>
<comment type="similarity">
    <text evidence="1">Belongs to the universal ribosomal protein uS11 family.</text>
</comment>
<geneLocation type="chloroplast"/>
<organism>
    <name type="scientific">Hordeum vulgare</name>
    <name type="common">Barley</name>
    <dbReference type="NCBI Taxonomy" id="4513"/>
    <lineage>
        <taxon>Eukaryota</taxon>
        <taxon>Viridiplantae</taxon>
        <taxon>Streptophyta</taxon>
        <taxon>Embryophyta</taxon>
        <taxon>Tracheophyta</taxon>
        <taxon>Spermatophyta</taxon>
        <taxon>Magnoliopsida</taxon>
        <taxon>Liliopsida</taxon>
        <taxon>Poales</taxon>
        <taxon>Poaceae</taxon>
        <taxon>BOP clade</taxon>
        <taxon>Pooideae</taxon>
        <taxon>Triticodae</taxon>
        <taxon>Triticeae</taxon>
        <taxon>Hordeinae</taxon>
        <taxon>Hordeum</taxon>
    </lineage>
</organism>
<name>RR11_HORVU</name>
<sequence>MAKAIPKIGSRKKVRIGLRRNARFSLRKSARRITKGVIHVQASFNNTIITVTDPQGRVVFWSSAGTCGFKSSRKASPYAGQRTAVDAIRTVGLQRAEVMVKGAGSGRDAALRAIAKSGVRLSCIRDVTPMPHNGCRPPKKRRL</sequence>
<evidence type="ECO:0000255" key="1">
    <source>
        <dbReference type="HAMAP-Rule" id="MF_01310"/>
    </source>
</evidence>
<evidence type="ECO:0000305" key="2"/>
<protein>
    <recommendedName>
        <fullName evidence="1">Small ribosomal subunit protein uS11c</fullName>
    </recommendedName>
    <alternativeName>
        <fullName evidence="2">30S ribosomal protein S11, chloroplastic</fullName>
    </alternativeName>
</protein>
<gene>
    <name evidence="1" type="primary">rps11</name>
</gene>